<protein>
    <recommendedName>
        <fullName>WD repeat-containing protein 7</fullName>
    </recommendedName>
    <alternativeName>
        <fullName>Rabconnectin-3 beta</fullName>
    </alternativeName>
    <alternativeName>
        <fullName>TGF-beta resistance-associated protein TRAG</fullName>
    </alternativeName>
</protein>
<gene>
    <name type="primary">WDR7</name>
    <name type="synonym">KIAA0541</name>
    <name type="synonym">TRAG</name>
</gene>
<name>WDR7_HUMAN</name>
<evidence type="ECO:0000256" key="1">
    <source>
        <dbReference type="SAM" id="MobiDB-lite"/>
    </source>
</evidence>
<evidence type="ECO:0000303" key="2">
    <source ref="2"/>
</evidence>
<evidence type="ECO:0000305" key="3"/>
<evidence type="ECO:0007744" key="4">
    <source>
    </source>
</evidence>
<accession>Q9Y4E6</accession>
<accession>A7E2C8</accession>
<accession>Q86UX5</accession>
<accession>Q86VP2</accession>
<accession>Q96PS7</accession>
<keyword id="KW-0025">Alternative splicing</keyword>
<keyword id="KW-0597">Phosphoprotein</keyword>
<keyword id="KW-1267">Proteomics identification</keyword>
<keyword id="KW-1185">Reference proteome</keyword>
<keyword id="KW-0677">Repeat</keyword>
<keyword id="KW-0853">WD repeat</keyword>
<organism>
    <name type="scientific">Homo sapiens</name>
    <name type="common">Human</name>
    <dbReference type="NCBI Taxonomy" id="9606"/>
    <lineage>
        <taxon>Eukaryota</taxon>
        <taxon>Metazoa</taxon>
        <taxon>Chordata</taxon>
        <taxon>Craniata</taxon>
        <taxon>Vertebrata</taxon>
        <taxon>Euteleostomi</taxon>
        <taxon>Mammalia</taxon>
        <taxon>Eutheria</taxon>
        <taxon>Euarchontoglires</taxon>
        <taxon>Primates</taxon>
        <taxon>Haplorrhini</taxon>
        <taxon>Catarrhini</taxon>
        <taxon>Hominidae</taxon>
        <taxon>Homo</taxon>
    </lineage>
</organism>
<dbReference type="EMBL" id="AY099325">
    <property type="protein sequence ID" value="AAM33134.1"/>
    <property type="molecule type" value="mRNA"/>
</dbReference>
<dbReference type="EMBL" id="AF188125">
    <property type="protein sequence ID" value="AAL03983.1"/>
    <property type="molecule type" value="mRNA"/>
</dbReference>
<dbReference type="EMBL" id="AB011113">
    <property type="protein sequence ID" value="BAA25467.2"/>
    <property type="status" value="ALT_INIT"/>
    <property type="molecule type" value="mRNA"/>
</dbReference>
<dbReference type="EMBL" id="CH471096">
    <property type="protein sequence ID" value="EAW63038.1"/>
    <property type="molecule type" value="Genomic_DNA"/>
</dbReference>
<dbReference type="EMBL" id="BC050352">
    <property type="protein sequence ID" value="AAH50352.1"/>
    <property type="molecule type" value="mRNA"/>
</dbReference>
<dbReference type="EMBL" id="BC150282">
    <property type="protein sequence ID" value="AAI50283.1"/>
    <property type="molecule type" value="mRNA"/>
</dbReference>
<dbReference type="CCDS" id="CCDS11962.1">
    <molecule id="Q9Y4E6-1"/>
</dbReference>
<dbReference type="CCDS" id="CCDS11963.1">
    <molecule id="Q9Y4E6-2"/>
</dbReference>
<dbReference type="PIR" id="T00272">
    <property type="entry name" value="T00272"/>
</dbReference>
<dbReference type="RefSeq" id="NP_001369414.1">
    <molecule id="Q9Y4E6-2"/>
    <property type="nucleotide sequence ID" value="NM_001382485.1"/>
</dbReference>
<dbReference type="RefSeq" id="NP_001369416.1">
    <molecule id="Q9Y4E6-1"/>
    <property type="nucleotide sequence ID" value="NM_001382487.1"/>
</dbReference>
<dbReference type="RefSeq" id="NP_056100.2">
    <molecule id="Q9Y4E6-1"/>
    <property type="nucleotide sequence ID" value="NM_015285.3"/>
</dbReference>
<dbReference type="RefSeq" id="NP_443066.2">
    <molecule id="Q9Y4E6-2"/>
    <property type="nucleotide sequence ID" value="NM_052834.3"/>
</dbReference>
<dbReference type="RefSeq" id="XP_006722494.1">
    <property type="nucleotide sequence ID" value="XM_006722431.2"/>
</dbReference>
<dbReference type="RefSeq" id="XP_016881171.1">
    <property type="nucleotide sequence ID" value="XM_017025682.1"/>
</dbReference>
<dbReference type="BioGRID" id="116922">
    <property type="interactions" value="87"/>
</dbReference>
<dbReference type="ComplexPortal" id="CPX-10301">
    <property type="entry name" value="RAVE complex, DMXL1 variant"/>
</dbReference>
<dbReference type="ComplexPortal" id="CPX-10303">
    <property type="entry name" value="RAVE complex, DMXL2 variant"/>
</dbReference>
<dbReference type="CORUM" id="Q9Y4E6"/>
<dbReference type="FunCoup" id="Q9Y4E6">
    <property type="interactions" value="1999"/>
</dbReference>
<dbReference type="IntAct" id="Q9Y4E6">
    <property type="interactions" value="21"/>
</dbReference>
<dbReference type="STRING" id="9606.ENSP00000254442"/>
<dbReference type="GlyGen" id="Q9Y4E6">
    <property type="glycosylation" value="1 site, 1 O-linked glycan (1 site)"/>
</dbReference>
<dbReference type="iPTMnet" id="Q9Y4E6"/>
<dbReference type="PhosphoSitePlus" id="Q9Y4E6"/>
<dbReference type="SwissPalm" id="Q9Y4E6"/>
<dbReference type="BioMuta" id="WDR7"/>
<dbReference type="DMDM" id="73920974"/>
<dbReference type="jPOST" id="Q9Y4E6"/>
<dbReference type="MassIVE" id="Q9Y4E6"/>
<dbReference type="PaxDb" id="9606-ENSP00000254442"/>
<dbReference type="PeptideAtlas" id="Q9Y4E6"/>
<dbReference type="ProteomicsDB" id="86181">
    <molecule id="Q9Y4E6-1"/>
</dbReference>
<dbReference type="ProteomicsDB" id="86182">
    <molecule id="Q9Y4E6-2"/>
</dbReference>
<dbReference type="Pumba" id="Q9Y4E6"/>
<dbReference type="Antibodypedia" id="62690">
    <property type="antibodies" value="21 antibodies from 11 providers"/>
</dbReference>
<dbReference type="DNASU" id="23335"/>
<dbReference type="Ensembl" id="ENST00000254442.8">
    <molecule id="Q9Y4E6-1"/>
    <property type="protein sequence ID" value="ENSP00000254442.3"/>
    <property type="gene ID" value="ENSG00000091157.15"/>
</dbReference>
<dbReference type="Ensembl" id="ENST00000357574.7">
    <molecule id="Q9Y4E6-2"/>
    <property type="protein sequence ID" value="ENSP00000350187.2"/>
    <property type="gene ID" value="ENSG00000091157.15"/>
</dbReference>
<dbReference type="GeneID" id="23335"/>
<dbReference type="KEGG" id="hsa:23335"/>
<dbReference type="MANE-Select" id="ENST00000254442.8">
    <property type="protein sequence ID" value="ENSP00000254442.3"/>
    <property type="RefSeq nucleotide sequence ID" value="NM_015285.3"/>
    <property type="RefSeq protein sequence ID" value="NP_056100.2"/>
</dbReference>
<dbReference type="UCSC" id="uc002lgk.2">
    <molecule id="Q9Y4E6-1"/>
    <property type="organism name" value="human"/>
</dbReference>
<dbReference type="AGR" id="HGNC:13490"/>
<dbReference type="CTD" id="23335"/>
<dbReference type="DisGeNET" id="23335"/>
<dbReference type="GeneCards" id="WDR7"/>
<dbReference type="HGNC" id="HGNC:13490">
    <property type="gene designation" value="WDR7"/>
</dbReference>
<dbReference type="HPA" id="ENSG00000091157">
    <property type="expression patterns" value="Low tissue specificity"/>
</dbReference>
<dbReference type="MIM" id="613473">
    <property type="type" value="gene"/>
</dbReference>
<dbReference type="neXtProt" id="NX_Q9Y4E6"/>
<dbReference type="OpenTargets" id="ENSG00000091157"/>
<dbReference type="PharmGKB" id="PA37784"/>
<dbReference type="VEuPathDB" id="HostDB:ENSG00000091157"/>
<dbReference type="eggNOG" id="KOG4155">
    <property type="taxonomic scope" value="Eukaryota"/>
</dbReference>
<dbReference type="GeneTree" id="ENSGT00940000155301"/>
<dbReference type="HOGENOM" id="CLU_004362_1_0_1"/>
<dbReference type="InParanoid" id="Q9Y4E6"/>
<dbReference type="OMA" id="KQMPPRI"/>
<dbReference type="OrthoDB" id="338622at2759"/>
<dbReference type="PAN-GO" id="Q9Y4E6">
    <property type="GO annotations" value="1 GO annotation based on evolutionary models"/>
</dbReference>
<dbReference type="PhylomeDB" id="Q9Y4E6"/>
<dbReference type="TreeFam" id="TF313196"/>
<dbReference type="PathwayCommons" id="Q9Y4E6"/>
<dbReference type="SignaLink" id="Q9Y4E6"/>
<dbReference type="BioGRID-ORCS" id="23335">
    <property type="hits" value="645 hits in 1198 CRISPR screens"/>
</dbReference>
<dbReference type="CD-CODE" id="FB4E32DD">
    <property type="entry name" value="Presynaptic clusters and postsynaptic densities"/>
</dbReference>
<dbReference type="ChiTaRS" id="WDR7">
    <property type="organism name" value="human"/>
</dbReference>
<dbReference type="GenomeRNAi" id="23335"/>
<dbReference type="Pharos" id="Q9Y4E6">
    <property type="development level" value="Tdark"/>
</dbReference>
<dbReference type="PRO" id="PR:Q9Y4E6"/>
<dbReference type="Proteomes" id="UP000005640">
    <property type="component" value="Chromosome 18"/>
</dbReference>
<dbReference type="RNAct" id="Q9Y4E6">
    <property type="molecule type" value="protein"/>
</dbReference>
<dbReference type="Bgee" id="ENSG00000091157">
    <property type="expression patterns" value="Expressed in endothelial cell and 201 other cell types or tissues"/>
</dbReference>
<dbReference type="ExpressionAtlas" id="Q9Y4E6">
    <property type="expression patterns" value="baseline and differential"/>
</dbReference>
<dbReference type="GO" id="GO:0005737">
    <property type="term" value="C:cytoplasm"/>
    <property type="evidence" value="ECO:0000318"/>
    <property type="project" value="GO_Central"/>
</dbReference>
<dbReference type="GO" id="GO:0002244">
    <property type="term" value="P:hematopoietic progenitor cell differentiation"/>
    <property type="evidence" value="ECO:0007669"/>
    <property type="project" value="Ensembl"/>
</dbReference>
<dbReference type="FunFam" id="2.130.10.10:FF:000432">
    <property type="entry name" value="WD repeat domain 7"/>
    <property type="match status" value="1"/>
</dbReference>
<dbReference type="FunFam" id="2.130.10.10:FF:000247">
    <property type="entry name" value="WD repeat-containing protein 72"/>
    <property type="match status" value="1"/>
</dbReference>
<dbReference type="Gene3D" id="2.130.10.10">
    <property type="entry name" value="YVTN repeat-like/Quinoprotein amine dehydrogenase"/>
    <property type="match status" value="3"/>
</dbReference>
<dbReference type="InterPro" id="IPR011047">
    <property type="entry name" value="Quinoprotein_ADH-like_sf"/>
</dbReference>
<dbReference type="InterPro" id="IPR015943">
    <property type="entry name" value="WD40/YVTN_repeat-like_dom_sf"/>
</dbReference>
<dbReference type="InterPro" id="IPR019775">
    <property type="entry name" value="WD40_repeat_CS"/>
</dbReference>
<dbReference type="InterPro" id="IPR036322">
    <property type="entry name" value="WD40_repeat_dom_sf"/>
</dbReference>
<dbReference type="InterPro" id="IPR001680">
    <property type="entry name" value="WD40_rpt"/>
</dbReference>
<dbReference type="InterPro" id="IPR049916">
    <property type="entry name" value="WDR7/72"/>
</dbReference>
<dbReference type="PANTHER" id="PTHR44099">
    <property type="entry name" value="RABCONNECTIN-3B, ISOFORM A"/>
    <property type="match status" value="1"/>
</dbReference>
<dbReference type="PANTHER" id="PTHR44099:SF3">
    <property type="entry name" value="WD REPEAT-CONTAINING PROTEIN 7"/>
    <property type="match status" value="1"/>
</dbReference>
<dbReference type="Pfam" id="PF00400">
    <property type="entry name" value="WD40"/>
    <property type="match status" value="5"/>
</dbReference>
<dbReference type="Pfam" id="PF23123">
    <property type="entry name" value="WDR72_alpha-sol"/>
    <property type="match status" value="1"/>
</dbReference>
<dbReference type="SMART" id="SM00320">
    <property type="entry name" value="WD40"/>
    <property type="match status" value="7"/>
</dbReference>
<dbReference type="SUPFAM" id="SSF50998">
    <property type="entry name" value="Quinoprotein alcohol dehydrogenase-like"/>
    <property type="match status" value="1"/>
</dbReference>
<dbReference type="SUPFAM" id="SSF50978">
    <property type="entry name" value="WD40 repeat-like"/>
    <property type="match status" value="1"/>
</dbReference>
<dbReference type="PROSITE" id="PS00678">
    <property type="entry name" value="WD_REPEATS_1"/>
    <property type="match status" value="2"/>
</dbReference>
<dbReference type="PROSITE" id="PS50082">
    <property type="entry name" value="WD_REPEATS_2"/>
    <property type="match status" value="4"/>
</dbReference>
<dbReference type="PROSITE" id="PS50294">
    <property type="entry name" value="WD_REPEATS_REGION"/>
    <property type="match status" value="3"/>
</dbReference>
<sequence length="1490" mass="163810">MAGNSLVLPIVLWGRKAPTHCISAVLLTDDGATIVTGCHDGQICLWDLSVELQINPRALLFGHTASITCLSKACASSDKQYIVSASESGEMCLWDVSDGRCIEFTKLACTHTGIQFYQFSVGNQREGRLLCHGHYPEILVVDATSLEVLYSLVSKISPDWISSMSIIRSHRTQEDTVVALSVTGILKVWIVTSEISDMQDTEPIFEEESKPIYCQNCQSISFCAFTQRSLLVVCSKYWRVFDAGDYSLLCSGPSENGQTWTGGDFVSSDKVIIWTENGQSYIYKLPASCLPASDSFRSDVGKAVENLIPPVQHILLDRKDKELLICPPVTRFFYGCREYFHKLLIQGDSSGRLNIWNISDTADKQGSEEGLAMTTSISLQEAFDKLNPCPAGIIDQLSVIPNSNEPLKVTASVYIPAHGRLVCGREDGSIVIVPATQTAIVQLLQGEHMLRRGWPPHRTLRGHRNKVTCLLYPHQVSARYDQRYLISGGVDFSVIIWDIFSGEMKHIFCVHGGEITQLLVPPENCSARVQHCICSVASDHSVGLLSLREKKCIMLASRHLFPIQVIKWRPSDDYLVVGCSDGSVYVWQMDTGALDRCVMGITAVEILNACDEAVPAAVDSLSHPAVNLKQAMTRRSLAALKNMAHHKLQTLATNLLASEASDKGNLPKYSHNSLMVQAIKTNLTDPDIHVLFFDVEALIIQLLTEEASRPNTALISPENLQKASGSSDKGGSFLTGKRAAVLFQQVKETIKENIKEHLLDDEEEDEEIMRQRREESDPEYRSSKSKPLTLLEYNLTMDTAKLFMSCLHAWGLNEVLDEVCLDRLGMLKPHCTVSFGLLSRGGHMSLMLPGYNQPACKLSHGKTEVGRKLPASEGVGKGTYGVSRAVTTQHLLSIISLANTLMSMTNATFIGDHMKKGPTRPPRPSTPDLSKARGSPPTSSNIVQGQIKQVAAPVVSARSDADHSGSDPPSAPALHTCFLVNEGWSQLAAMHCVMLPDLLGLDKFRPPLLEMLARRWQDRCLEVREAAQALLLAELRRIEQAGRKEAIDAWAPYLPQYIDHVISPGVTSEAAQTITTAPDASGPEAKVQEEEHDLVDDDITTGCLSSVPQMKKISTSYEERRKQATAIVLLGVIGAEFGAEIEPPKLLTRPRSSSQIPEGFGLTSGGSNYSLARHTCKALTFLLLQPPSPKLPPHSTIRRTAIDLIGRGFTVWEPYMDVSAVLMGLLELCADAEKQLANITMGLPLSPAADSARSARHALSLIATARPPAFITTIAKEVHRHTALAANTQSQQNMHTTTLARAKGEILRVIEILIEKMPTDVVDLLVEVMDIIMYCLEGSLVKKKGLQECFPAICRFYMVSYYERNHRIAVGARHGSVALYDIRTGKCQTIHGHKGPITAVAFAPDGRYLATYSNTDSHISFWQMNTSLLGSIGMLNSAPQLRCIKTYQVPPVQPASPGSHNALKLARLIWTSNRNVILMAHDGKEHRFMV</sequence>
<proteinExistence type="evidence at protein level"/>
<feature type="chain" id="PRO_0000051353" description="WD repeat-containing protein 7">
    <location>
        <begin position="1"/>
        <end position="1490"/>
    </location>
</feature>
<feature type="repeat" description="WD 1">
    <location>
        <begin position="17"/>
        <end position="56"/>
    </location>
</feature>
<feature type="repeat" description="WD 2">
    <location>
        <begin position="62"/>
        <end position="104"/>
    </location>
</feature>
<feature type="repeat" description="WD 3">
    <location>
        <begin position="156"/>
        <end position="199"/>
    </location>
</feature>
<feature type="repeat" description="WD 4">
    <location>
        <begin position="324"/>
        <end position="366"/>
    </location>
</feature>
<feature type="repeat" description="WD 5">
    <location>
        <begin position="404"/>
        <end position="443"/>
    </location>
</feature>
<feature type="repeat" description="WD 6">
    <location>
        <begin position="462"/>
        <end position="507"/>
    </location>
</feature>
<feature type="repeat" description="WD 7">
    <location>
        <begin position="558"/>
        <end position="597"/>
    </location>
</feature>
<feature type="repeat" description="WD 8">
    <location>
        <begin position="1351"/>
        <end position="1390"/>
    </location>
</feature>
<feature type="repeat" description="WD 9">
    <location>
        <begin position="1392"/>
        <end position="1432"/>
    </location>
</feature>
<feature type="region of interest" description="Disordered" evidence="1">
    <location>
        <begin position="761"/>
        <end position="783"/>
    </location>
</feature>
<feature type="region of interest" description="Disordered" evidence="1">
    <location>
        <begin position="911"/>
        <end position="945"/>
    </location>
</feature>
<feature type="compositionally biased region" description="Basic and acidic residues" evidence="1">
    <location>
        <begin position="768"/>
        <end position="782"/>
    </location>
</feature>
<feature type="compositionally biased region" description="Polar residues" evidence="1">
    <location>
        <begin position="936"/>
        <end position="945"/>
    </location>
</feature>
<feature type="modified residue" description="Phosphoserine" evidence="4">
    <location>
        <position position="935"/>
    </location>
</feature>
<feature type="modified residue" description="Phosphoserine" evidence="4">
    <location>
        <position position="1456"/>
    </location>
</feature>
<feature type="splice variant" id="VSP_015274" description="In isoform 2." evidence="2">
    <location>
        <begin position="950"/>
        <end position="982"/>
    </location>
</feature>
<feature type="sequence conflict" description="In Ref. 2; AAL03983." evidence="3" ref="2">
    <original>I</original>
    <variation>V</variation>
    <location>
        <position position="54"/>
    </location>
</feature>
<reference key="1">
    <citation type="journal article" date="2003" name="Genes Cells">
        <title>A novel rabconnectin-3-binding protein that directly binds a GDP/GTP exchange protein for Rab3A small G protein implicated in Ca(2+)-dependent exocytosis of neurotransmitter.</title>
        <authorList>
            <person name="Kawabe H."/>
            <person name="Sakisaka T."/>
            <person name="Yasumi M."/>
            <person name="Shingai T."/>
            <person name="Izumi G."/>
            <person name="Nagano F."/>
            <person name="Deguchi-Tawarada M."/>
            <person name="Takeuchi M."/>
            <person name="Nakanishi H."/>
            <person name="Takai Y."/>
        </authorList>
    </citation>
    <scope>NUCLEOTIDE SEQUENCE [MRNA] (ISOFORM 1)</scope>
</reference>
<reference key="2">
    <citation type="submission" date="1999-09" db="EMBL/GenBank/DDBJ databases">
        <title>TRAG: a novel gene associated with TGF-beta resistance.</title>
        <authorList>
            <person name="Sanders S."/>
            <person name="Thorgeirsson S.S."/>
        </authorList>
    </citation>
    <scope>NUCLEOTIDE SEQUENCE [MRNA] (ISOFORM 2)</scope>
    <source>
        <tissue>Liver</tissue>
    </source>
</reference>
<reference key="3">
    <citation type="journal article" date="1998" name="DNA Res.">
        <title>Prediction of the coding sequences of unidentified human genes. IX. The complete sequences of 100 new cDNA clones from brain which can code for large proteins in vitro.</title>
        <authorList>
            <person name="Nagase T."/>
            <person name="Ishikawa K."/>
            <person name="Miyajima N."/>
            <person name="Tanaka A."/>
            <person name="Kotani H."/>
            <person name="Nomura N."/>
            <person name="Ohara O."/>
        </authorList>
    </citation>
    <scope>NUCLEOTIDE SEQUENCE [LARGE SCALE MRNA] (ISOFORM 1)</scope>
    <source>
        <tissue>Brain</tissue>
    </source>
</reference>
<reference key="4">
    <citation type="submission" date="2005-08" db="EMBL/GenBank/DDBJ databases">
        <authorList>
            <person name="Ohara O."/>
            <person name="Nagase T."/>
            <person name="Kikuno R."/>
            <person name="Ishikawa K."/>
        </authorList>
    </citation>
    <scope>SEQUENCE REVISION</scope>
</reference>
<reference key="5">
    <citation type="submission" date="2005-07" db="EMBL/GenBank/DDBJ databases">
        <authorList>
            <person name="Mural R.J."/>
            <person name="Istrail S."/>
            <person name="Sutton G.G."/>
            <person name="Florea L."/>
            <person name="Halpern A.L."/>
            <person name="Mobarry C.M."/>
            <person name="Lippert R."/>
            <person name="Walenz B."/>
            <person name="Shatkay H."/>
            <person name="Dew I."/>
            <person name="Miller J.R."/>
            <person name="Flanigan M.J."/>
            <person name="Edwards N.J."/>
            <person name="Bolanos R."/>
            <person name="Fasulo D."/>
            <person name="Halldorsson B.V."/>
            <person name="Hannenhalli S."/>
            <person name="Turner R."/>
            <person name="Yooseph S."/>
            <person name="Lu F."/>
            <person name="Nusskern D.R."/>
            <person name="Shue B.C."/>
            <person name="Zheng X.H."/>
            <person name="Zhong F."/>
            <person name="Delcher A.L."/>
            <person name="Huson D.H."/>
            <person name="Kravitz S.A."/>
            <person name="Mouchard L."/>
            <person name="Reinert K."/>
            <person name="Remington K.A."/>
            <person name="Clark A.G."/>
            <person name="Waterman M.S."/>
            <person name="Eichler E.E."/>
            <person name="Adams M.D."/>
            <person name="Hunkapiller M.W."/>
            <person name="Myers E.W."/>
            <person name="Venter J.C."/>
        </authorList>
    </citation>
    <scope>NUCLEOTIDE SEQUENCE [LARGE SCALE GENOMIC DNA]</scope>
</reference>
<reference key="6">
    <citation type="journal article" date="2004" name="Genome Res.">
        <title>The status, quality, and expansion of the NIH full-length cDNA project: the Mammalian Gene Collection (MGC).</title>
        <authorList>
            <consortium name="The MGC Project Team"/>
        </authorList>
    </citation>
    <scope>NUCLEOTIDE SEQUENCE [LARGE SCALE MRNA] (ISOFORM 1)</scope>
    <source>
        <tissue>Brain</tissue>
    </source>
</reference>
<reference key="7">
    <citation type="journal article" date="2008" name="Proc. Natl. Acad. Sci. U.S.A.">
        <title>A quantitative atlas of mitotic phosphorylation.</title>
        <authorList>
            <person name="Dephoure N."/>
            <person name="Zhou C."/>
            <person name="Villen J."/>
            <person name="Beausoleil S.A."/>
            <person name="Bakalarski C.E."/>
            <person name="Elledge S.J."/>
            <person name="Gygi S.P."/>
        </authorList>
    </citation>
    <scope>IDENTIFICATION BY MASS SPECTROMETRY [LARGE SCALE ANALYSIS]</scope>
    <source>
        <tissue>Cervix carcinoma</tissue>
    </source>
</reference>
<reference key="8">
    <citation type="journal article" date="2009" name="Sci. Signal.">
        <title>Quantitative phosphoproteomic analysis of T cell receptor signaling reveals system-wide modulation of protein-protein interactions.</title>
        <authorList>
            <person name="Mayya V."/>
            <person name="Lundgren D.H."/>
            <person name="Hwang S.-I."/>
            <person name="Rezaul K."/>
            <person name="Wu L."/>
            <person name="Eng J.K."/>
            <person name="Rodionov V."/>
            <person name="Han D.K."/>
        </authorList>
    </citation>
    <scope>IDENTIFICATION BY MASS SPECTROMETRY [LARGE SCALE ANALYSIS]</scope>
    <source>
        <tissue>Leukemic T-cell</tissue>
    </source>
</reference>
<reference key="9">
    <citation type="journal article" date="2013" name="J. Proteome Res.">
        <title>Toward a comprehensive characterization of a human cancer cell phosphoproteome.</title>
        <authorList>
            <person name="Zhou H."/>
            <person name="Di Palma S."/>
            <person name="Preisinger C."/>
            <person name="Peng M."/>
            <person name="Polat A.N."/>
            <person name="Heck A.J."/>
            <person name="Mohammed S."/>
        </authorList>
    </citation>
    <scope>PHOSPHORYLATION [LARGE SCALE ANALYSIS] AT SER-935 AND SER-1456</scope>
    <scope>IDENTIFICATION BY MASS SPECTROMETRY [LARGE SCALE ANALYSIS]</scope>
    <source>
        <tissue>Cervix carcinoma</tissue>
        <tissue>Erythroleukemia</tissue>
    </source>
</reference>
<comment type="alternative products">
    <event type="alternative splicing"/>
    <isoform>
        <id>Q9Y4E6-1</id>
        <name>1</name>
        <sequence type="displayed"/>
    </isoform>
    <isoform>
        <id>Q9Y4E6-2</id>
        <name>2</name>
        <sequence type="described" ref="VSP_015274"/>
    </isoform>
</comment>
<comment type="sequence caution" evidence="3">
    <conflict type="erroneous initiation">
        <sequence resource="EMBL-CDS" id="BAA25467"/>
    </conflict>
</comment>